<reference key="1">
    <citation type="journal article" date="2000" name="J. Virol.">
        <title>The genome of fowlpox virus.</title>
        <authorList>
            <person name="Afonso C.L."/>
            <person name="Tulman E.R."/>
            <person name="Lu Z."/>
            <person name="Zsak L."/>
            <person name="Kutish G.F."/>
            <person name="Rock D.L."/>
        </authorList>
    </citation>
    <scope>NUCLEOTIDE SEQUENCE [LARGE SCALE GENOMIC DNA]</scope>
</reference>
<gene>
    <name type="ordered locus">FPV127</name>
    <name type="ordered locus">fp9.127</name>
    <name type="ORF">FP1</name>
</gene>
<protein>
    <recommendedName>
        <fullName>Protein FPV127</fullName>
    </recommendedName>
</protein>
<proteinExistence type="inferred from homology"/>
<dbReference type="EMBL" id="AF198100">
    <property type="protein sequence ID" value="AAF44394.1"/>
    <property type="status" value="ALT_SEQ"/>
    <property type="molecule type" value="Genomic_DNA"/>
</dbReference>
<dbReference type="RefSeq" id="NP_039013.1">
    <property type="nucleotide sequence ID" value="NC_002188.1"/>
</dbReference>
<dbReference type="SMR" id="P0DTB1"/>
<dbReference type="KEGG" id="vg:1486598"/>
<dbReference type="Proteomes" id="UP000008597">
    <property type="component" value="Segment"/>
</dbReference>
<dbReference type="InterPro" id="IPR004251">
    <property type="entry name" value="Pox_virus_G9/A16"/>
</dbReference>
<dbReference type="Pfam" id="PF03003">
    <property type="entry name" value="Pox_G9-A16"/>
    <property type="match status" value="1"/>
</dbReference>
<comment type="similarity">
    <text evidence="2">Belongs to the poxviruses A16/G9/J5 family.</text>
</comment>
<keyword id="KW-1185">Reference proteome</keyword>
<organismHost>
    <name type="scientific">Vertebrata</name>
    <dbReference type="NCBI Taxonomy" id="7742"/>
</organismHost>
<feature type="chain" id="PRO_0000099545" description="Protein FPV127">
    <location>
        <begin position="1"/>
        <end position="336"/>
    </location>
</feature>
<feature type="region of interest" description="Disordered" evidence="1">
    <location>
        <begin position="1"/>
        <end position="22"/>
    </location>
</feature>
<accession>P0DTB1</accession>
<accession>P15909</accession>
<accession>Q70H31</accession>
<accession>Q9J596</accession>
<evidence type="ECO:0000256" key="1">
    <source>
        <dbReference type="SAM" id="MobiDB-lite"/>
    </source>
</evidence>
<evidence type="ECO:0000305" key="2"/>
<organism>
    <name type="scientific">Fowlpox virus (strain NVSL)</name>
    <name type="common">FPV</name>
    <dbReference type="NCBI Taxonomy" id="928301"/>
    <lineage>
        <taxon>Viruses</taxon>
        <taxon>Varidnaviria</taxon>
        <taxon>Bamfordvirae</taxon>
        <taxon>Nucleocytoviricota</taxon>
        <taxon>Pokkesviricetes</taxon>
        <taxon>Chitovirales</taxon>
        <taxon>Poxviridae</taxon>
        <taxon>Chordopoxvirinae</taxon>
        <taxon>Avipoxvirus</taxon>
        <taxon>Fowlpox virus</taxon>
    </lineage>
</organism>
<sequence>MGGGLVLPTRDPPKEQDTSETATNIPKLLKSIPGVKLGQQIRIGYKPGPETAKAFPEFDIKEVSNGLYELSRKSYLGDTKTCCINPSLSYYWEDSKNKIFDEYATGRSLKTCDPLTKTISGSTLCDNILTSLCLDEKSGVDRTMCNEWMGYALNRPDLSIPKSINDRYTKLCSKGANNIVCEDWLHHLRIIGGKENDEVIDNVLMQQTPEFKEKYMKCSFPSHNTVFLADRVIEPRECWDQECITSNVHFLLSKNYHNLTLCHIYRCNISINNLLIDGKSSVKISCHDENISNKDKPKARNKAKFIDDILGSSFNINFGFFFVIFIMIALILIVLL</sequence>
<name>V127_FOWPN</name>